<protein>
    <recommendedName>
        <fullName evidence="1">Recombination protein RecR</fullName>
    </recommendedName>
</protein>
<organism>
    <name type="scientific">Lactococcus lactis subsp. lactis (strain IL1403)</name>
    <name type="common">Streptococcus lactis</name>
    <dbReference type="NCBI Taxonomy" id="272623"/>
    <lineage>
        <taxon>Bacteria</taxon>
        <taxon>Bacillati</taxon>
        <taxon>Bacillota</taxon>
        <taxon>Bacilli</taxon>
        <taxon>Lactobacillales</taxon>
        <taxon>Streptococcaceae</taxon>
        <taxon>Lactococcus</taxon>
    </lineage>
</organism>
<gene>
    <name evidence="1" type="primary">recR</name>
    <name type="synonym">recM</name>
    <name type="ordered locus">LL0340</name>
    <name type="ORF">L0265</name>
</gene>
<comment type="function">
    <text evidence="1">May play a role in DNA repair. It seems to be involved in an RecBC-independent recombinational process of DNA repair. It may act with RecF and RecO.</text>
</comment>
<comment type="similarity">
    <text evidence="1">Belongs to the RecR family.</text>
</comment>
<feature type="chain" id="PRO_0000190335" description="Recombination protein RecR">
    <location>
        <begin position="1"/>
        <end position="198"/>
    </location>
</feature>
<feature type="domain" description="Toprim" evidence="1">
    <location>
        <begin position="80"/>
        <end position="175"/>
    </location>
</feature>
<feature type="zinc finger region" description="C4-type" evidence="1">
    <location>
        <begin position="57"/>
        <end position="72"/>
    </location>
</feature>
<dbReference type="EMBL" id="AE005176">
    <property type="protein sequence ID" value="AAK04438.1"/>
    <property type="molecule type" value="Genomic_DNA"/>
</dbReference>
<dbReference type="PIR" id="D86667">
    <property type="entry name" value="D86667"/>
</dbReference>
<dbReference type="RefSeq" id="NP_266496.1">
    <property type="nucleotide sequence ID" value="NC_002662.1"/>
</dbReference>
<dbReference type="RefSeq" id="WP_003131648.1">
    <property type="nucleotide sequence ID" value="NC_002662.1"/>
</dbReference>
<dbReference type="SMR" id="Q9CIL6"/>
<dbReference type="PaxDb" id="272623-L0265"/>
<dbReference type="EnsemblBacteria" id="AAK04438">
    <property type="protein sequence ID" value="AAK04438"/>
    <property type="gene ID" value="L0265"/>
</dbReference>
<dbReference type="GeneID" id="89632518"/>
<dbReference type="KEGG" id="lla:L0265"/>
<dbReference type="PATRIC" id="fig|272623.7.peg.373"/>
<dbReference type="eggNOG" id="COG0353">
    <property type="taxonomic scope" value="Bacteria"/>
</dbReference>
<dbReference type="HOGENOM" id="CLU_060739_1_0_9"/>
<dbReference type="OrthoDB" id="9802672at2"/>
<dbReference type="Proteomes" id="UP000002196">
    <property type="component" value="Chromosome"/>
</dbReference>
<dbReference type="GO" id="GO:0003677">
    <property type="term" value="F:DNA binding"/>
    <property type="evidence" value="ECO:0007669"/>
    <property type="project" value="UniProtKB-UniRule"/>
</dbReference>
<dbReference type="GO" id="GO:0008270">
    <property type="term" value="F:zinc ion binding"/>
    <property type="evidence" value="ECO:0007669"/>
    <property type="project" value="UniProtKB-KW"/>
</dbReference>
<dbReference type="GO" id="GO:0006310">
    <property type="term" value="P:DNA recombination"/>
    <property type="evidence" value="ECO:0007669"/>
    <property type="project" value="UniProtKB-UniRule"/>
</dbReference>
<dbReference type="GO" id="GO:0006281">
    <property type="term" value="P:DNA repair"/>
    <property type="evidence" value="ECO:0007669"/>
    <property type="project" value="UniProtKB-UniRule"/>
</dbReference>
<dbReference type="CDD" id="cd01025">
    <property type="entry name" value="TOPRIM_recR"/>
    <property type="match status" value="1"/>
</dbReference>
<dbReference type="Gene3D" id="3.30.60.80">
    <property type="match status" value="1"/>
</dbReference>
<dbReference type="Gene3D" id="3.40.1360.10">
    <property type="match status" value="1"/>
</dbReference>
<dbReference type="Gene3D" id="6.10.250.240">
    <property type="match status" value="1"/>
</dbReference>
<dbReference type="Gene3D" id="1.10.8.420">
    <property type="entry name" value="RecR Domain 1"/>
    <property type="match status" value="1"/>
</dbReference>
<dbReference type="HAMAP" id="MF_00017">
    <property type="entry name" value="RecR"/>
    <property type="match status" value="1"/>
</dbReference>
<dbReference type="InterPro" id="IPR000093">
    <property type="entry name" value="DNA_Rcmb_RecR"/>
</dbReference>
<dbReference type="InterPro" id="IPR023627">
    <property type="entry name" value="Rcmb_RecR"/>
</dbReference>
<dbReference type="InterPro" id="IPR015967">
    <property type="entry name" value="Rcmb_RecR_Znf"/>
</dbReference>
<dbReference type="InterPro" id="IPR006171">
    <property type="entry name" value="TOPRIM_dom"/>
</dbReference>
<dbReference type="InterPro" id="IPR034137">
    <property type="entry name" value="TOPRIM_RecR"/>
</dbReference>
<dbReference type="NCBIfam" id="TIGR00615">
    <property type="entry name" value="recR"/>
    <property type="match status" value="1"/>
</dbReference>
<dbReference type="PANTHER" id="PTHR30446">
    <property type="entry name" value="RECOMBINATION PROTEIN RECR"/>
    <property type="match status" value="1"/>
</dbReference>
<dbReference type="PANTHER" id="PTHR30446:SF0">
    <property type="entry name" value="RECOMBINATION PROTEIN RECR"/>
    <property type="match status" value="1"/>
</dbReference>
<dbReference type="Pfam" id="PF21175">
    <property type="entry name" value="RecR_C"/>
    <property type="match status" value="1"/>
</dbReference>
<dbReference type="Pfam" id="PF21176">
    <property type="entry name" value="RecR_HhH"/>
    <property type="match status" value="1"/>
</dbReference>
<dbReference type="Pfam" id="PF02132">
    <property type="entry name" value="RecR_ZnF"/>
    <property type="match status" value="1"/>
</dbReference>
<dbReference type="Pfam" id="PF13662">
    <property type="entry name" value="Toprim_4"/>
    <property type="match status" value="1"/>
</dbReference>
<dbReference type="SMART" id="SM00493">
    <property type="entry name" value="TOPRIM"/>
    <property type="match status" value="1"/>
</dbReference>
<dbReference type="SUPFAM" id="SSF111304">
    <property type="entry name" value="Recombination protein RecR"/>
    <property type="match status" value="1"/>
</dbReference>
<dbReference type="PROSITE" id="PS01300">
    <property type="entry name" value="RECR"/>
    <property type="match status" value="1"/>
</dbReference>
<dbReference type="PROSITE" id="PS50880">
    <property type="entry name" value="TOPRIM"/>
    <property type="match status" value="1"/>
</dbReference>
<evidence type="ECO:0000255" key="1">
    <source>
        <dbReference type="HAMAP-Rule" id="MF_00017"/>
    </source>
</evidence>
<accession>Q9CIL6</accession>
<sequence length="198" mass="21909">MYYPEPIARLIESFSKLPGIGQKTATRLAFYTIGMEDQDVNEFAKNLLSAKRDLSFCSICGNLTESDPCAICTDPTRDRTTILVVEESKDVLAMEKIREYRGLYHVLHGTISPMNGISPDEINVKTLITRLMDSEVKEVIIATNATSDGEATAMYLARMIKPAGIKVTRLARGLAVGSDIEYADEITLSKAVENRLEI</sequence>
<keyword id="KW-0227">DNA damage</keyword>
<keyword id="KW-0233">DNA recombination</keyword>
<keyword id="KW-0234">DNA repair</keyword>
<keyword id="KW-0479">Metal-binding</keyword>
<keyword id="KW-1185">Reference proteome</keyword>
<keyword id="KW-0862">Zinc</keyword>
<keyword id="KW-0863">Zinc-finger</keyword>
<proteinExistence type="inferred from homology"/>
<name>RECR_LACLA</name>
<reference key="1">
    <citation type="journal article" date="2001" name="Genome Res.">
        <title>The complete genome sequence of the lactic acid bacterium Lactococcus lactis ssp. lactis IL1403.</title>
        <authorList>
            <person name="Bolotin A."/>
            <person name="Wincker P."/>
            <person name="Mauger S."/>
            <person name="Jaillon O."/>
            <person name="Malarme K."/>
            <person name="Weissenbach J."/>
            <person name="Ehrlich S.D."/>
            <person name="Sorokin A."/>
        </authorList>
    </citation>
    <scope>NUCLEOTIDE SEQUENCE [LARGE SCALE GENOMIC DNA]</scope>
    <source>
        <strain>IL1403</strain>
    </source>
</reference>